<accession>B1IX05</accession>
<evidence type="ECO:0000255" key="1">
    <source>
        <dbReference type="HAMAP-Rule" id="MF_00815"/>
    </source>
</evidence>
<reference key="1">
    <citation type="submission" date="2008-02" db="EMBL/GenBank/DDBJ databases">
        <title>Complete sequence of Escherichia coli C str. ATCC 8739.</title>
        <authorList>
            <person name="Copeland A."/>
            <person name="Lucas S."/>
            <person name="Lapidus A."/>
            <person name="Glavina del Rio T."/>
            <person name="Dalin E."/>
            <person name="Tice H."/>
            <person name="Bruce D."/>
            <person name="Goodwin L."/>
            <person name="Pitluck S."/>
            <person name="Kiss H."/>
            <person name="Brettin T."/>
            <person name="Detter J.C."/>
            <person name="Han C."/>
            <person name="Kuske C.R."/>
            <person name="Schmutz J."/>
            <person name="Larimer F."/>
            <person name="Land M."/>
            <person name="Hauser L."/>
            <person name="Kyrpides N."/>
            <person name="Mikhailova N."/>
            <person name="Ingram L."/>
            <person name="Richardson P."/>
        </authorList>
    </citation>
    <scope>NUCLEOTIDE SEQUENCE [LARGE SCALE GENOMIC DNA]</scope>
    <source>
        <strain>ATCC 8739 / DSM 1576 / NBRC 3972 / NCIMB 8545 / WDCM 00012 / Crooks</strain>
    </source>
</reference>
<gene>
    <name evidence="1" type="primary">atpG</name>
    <name type="ordered locus">EcolC_4261</name>
</gene>
<name>ATPG_ECOLC</name>
<keyword id="KW-0066">ATP synthesis</keyword>
<keyword id="KW-0997">Cell inner membrane</keyword>
<keyword id="KW-1003">Cell membrane</keyword>
<keyword id="KW-0139">CF(1)</keyword>
<keyword id="KW-0375">Hydrogen ion transport</keyword>
<keyword id="KW-0406">Ion transport</keyword>
<keyword id="KW-0472">Membrane</keyword>
<keyword id="KW-0813">Transport</keyword>
<proteinExistence type="inferred from homology"/>
<sequence>MAGAKEIRSKIASVQNTQKITKAMEMVAASKMRKSQDRMAASRPYAETMRKVIGHLAHGNLEYKHPYLEDRDVKRVGYLVVSTDRGLCGGLNINLFKKLLAEMKTWTDKGVQCDLAMIGSKGVSFFNSVGGNVVAQVTGMGDNPSLSELIGPVKVMLQAYDEGRLDKLYIVSNKFINTMSQVPTISQLLPLPASDDDDLKHKSWDYLYEPDPKALLDTLLRRYVESQVYQGVVENLASEQAARMVAMKAATDNGGSLIKELQLVYNKARQASITQELTEIVSGAAAV</sequence>
<protein>
    <recommendedName>
        <fullName evidence="1">ATP synthase gamma chain</fullName>
    </recommendedName>
    <alternativeName>
        <fullName evidence="1">ATP synthase F1 sector gamma subunit</fullName>
    </alternativeName>
    <alternativeName>
        <fullName evidence="1">F-ATPase gamma subunit</fullName>
    </alternativeName>
</protein>
<dbReference type="EMBL" id="CP000946">
    <property type="protein sequence ID" value="ACA79857.1"/>
    <property type="molecule type" value="Genomic_DNA"/>
</dbReference>
<dbReference type="RefSeq" id="WP_000896498.1">
    <property type="nucleotide sequence ID" value="NZ_MTFT01000013.1"/>
</dbReference>
<dbReference type="SMR" id="B1IX05"/>
<dbReference type="GeneID" id="93778234"/>
<dbReference type="KEGG" id="ecl:EcolC_4261"/>
<dbReference type="HOGENOM" id="CLU_050669_0_1_6"/>
<dbReference type="GO" id="GO:0005886">
    <property type="term" value="C:plasma membrane"/>
    <property type="evidence" value="ECO:0007669"/>
    <property type="project" value="UniProtKB-SubCell"/>
</dbReference>
<dbReference type="GO" id="GO:0045259">
    <property type="term" value="C:proton-transporting ATP synthase complex"/>
    <property type="evidence" value="ECO:0007669"/>
    <property type="project" value="UniProtKB-KW"/>
</dbReference>
<dbReference type="GO" id="GO:0005524">
    <property type="term" value="F:ATP binding"/>
    <property type="evidence" value="ECO:0007669"/>
    <property type="project" value="UniProtKB-UniRule"/>
</dbReference>
<dbReference type="GO" id="GO:0046933">
    <property type="term" value="F:proton-transporting ATP synthase activity, rotational mechanism"/>
    <property type="evidence" value="ECO:0007669"/>
    <property type="project" value="UniProtKB-UniRule"/>
</dbReference>
<dbReference type="GO" id="GO:0042777">
    <property type="term" value="P:proton motive force-driven plasma membrane ATP synthesis"/>
    <property type="evidence" value="ECO:0007669"/>
    <property type="project" value="UniProtKB-UniRule"/>
</dbReference>
<dbReference type="CDD" id="cd12151">
    <property type="entry name" value="F1-ATPase_gamma"/>
    <property type="match status" value="1"/>
</dbReference>
<dbReference type="FunFam" id="1.10.287.80:FF:000005">
    <property type="entry name" value="ATP synthase gamma chain"/>
    <property type="match status" value="2"/>
</dbReference>
<dbReference type="FunFam" id="3.40.1380.10:FF:000001">
    <property type="entry name" value="ATP synthase gamma chain"/>
    <property type="match status" value="1"/>
</dbReference>
<dbReference type="Gene3D" id="3.40.1380.10">
    <property type="match status" value="1"/>
</dbReference>
<dbReference type="Gene3D" id="1.10.287.80">
    <property type="entry name" value="ATP synthase, gamma subunit, helix hairpin domain"/>
    <property type="match status" value="1"/>
</dbReference>
<dbReference type="HAMAP" id="MF_00815">
    <property type="entry name" value="ATP_synth_gamma_bact"/>
    <property type="match status" value="1"/>
</dbReference>
<dbReference type="InterPro" id="IPR035968">
    <property type="entry name" value="ATP_synth_F1_ATPase_gsu"/>
</dbReference>
<dbReference type="InterPro" id="IPR000131">
    <property type="entry name" value="ATP_synth_F1_gsu"/>
</dbReference>
<dbReference type="InterPro" id="IPR023632">
    <property type="entry name" value="ATP_synth_F1_gsu_CS"/>
</dbReference>
<dbReference type="NCBIfam" id="TIGR01146">
    <property type="entry name" value="ATPsyn_F1gamma"/>
    <property type="match status" value="1"/>
</dbReference>
<dbReference type="NCBIfam" id="NF004144">
    <property type="entry name" value="PRK05621.1-1"/>
    <property type="match status" value="1"/>
</dbReference>
<dbReference type="PANTHER" id="PTHR11693">
    <property type="entry name" value="ATP SYNTHASE GAMMA CHAIN"/>
    <property type="match status" value="1"/>
</dbReference>
<dbReference type="PANTHER" id="PTHR11693:SF22">
    <property type="entry name" value="ATP SYNTHASE SUBUNIT GAMMA, MITOCHONDRIAL"/>
    <property type="match status" value="1"/>
</dbReference>
<dbReference type="Pfam" id="PF00231">
    <property type="entry name" value="ATP-synt"/>
    <property type="match status" value="1"/>
</dbReference>
<dbReference type="PRINTS" id="PR00126">
    <property type="entry name" value="ATPASEGAMMA"/>
</dbReference>
<dbReference type="SUPFAM" id="SSF52943">
    <property type="entry name" value="ATP synthase (F1-ATPase), gamma subunit"/>
    <property type="match status" value="1"/>
</dbReference>
<dbReference type="PROSITE" id="PS00153">
    <property type="entry name" value="ATPASE_GAMMA"/>
    <property type="match status" value="1"/>
</dbReference>
<feature type="chain" id="PRO_1000083785" description="ATP synthase gamma chain">
    <location>
        <begin position="1"/>
        <end position="287"/>
    </location>
</feature>
<comment type="function">
    <text evidence="1">Produces ATP from ADP in the presence of a proton gradient across the membrane. The gamma chain is believed to be important in regulating ATPase activity and the flow of protons through the CF(0) complex.</text>
</comment>
<comment type="subunit">
    <text evidence="1">F-type ATPases have 2 components, CF(1) - the catalytic core - and CF(0) - the membrane proton channel. CF(1) has five subunits: alpha(3), beta(3), gamma(1), delta(1), epsilon(1). CF(0) has three main subunits: a, b and c.</text>
</comment>
<comment type="subcellular location">
    <subcellularLocation>
        <location evidence="1">Cell inner membrane</location>
        <topology evidence="1">Peripheral membrane protein</topology>
    </subcellularLocation>
</comment>
<comment type="similarity">
    <text evidence="1">Belongs to the ATPase gamma chain family.</text>
</comment>
<organism>
    <name type="scientific">Escherichia coli (strain ATCC 8739 / DSM 1576 / NBRC 3972 / NCIMB 8545 / WDCM 00012 / Crooks)</name>
    <dbReference type="NCBI Taxonomy" id="481805"/>
    <lineage>
        <taxon>Bacteria</taxon>
        <taxon>Pseudomonadati</taxon>
        <taxon>Pseudomonadota</taxon>
        <taxon>Gammaproteobacteria</taxon>
        <taxon>Enterobacterales</taxon>
        <taxon>Enterobacteriaceae</taxon>
        <taxon>Escherichia</taxon>
    </lineage>
</organism>